<evidence type="ECO:0000250" key="1"/>
<evidence type="ECO:0000255" key="2">
    <source>
        <dbReference type="PROSITE-ProRule" id="PRU00403"/>
    </source>
</evidence>
<evidence type="ECO:0000255" key="3">
    <source>
        <dbReference type="PROSITE-ProRule" id="PRU00404"/>
    </source>
</evidence>
<evidence type="ECO:0000256" key="4">
    <source>
        <dbReference type="SAM" id="MobiDB-lite"/>
    </source>
</evidence>
<evidence type="ECO:0000305" key="5"/>
<organism>
    <name type="scientific">Caenorhabditis elegans</name>
    <dbReference type="NCBI Taxonomy" id="6239"/>
    <lineage>
        <taxon>Eukaryota</taxon>
        <taxon>Metazoa</taxon>
        <taxon>Ecdysozoa</taxon>
        <taxon>Nematoda</taxon>
        <taxon>Chromadorea</taxon>
        <taxon>Rhabditida</taxon>
        <taxon>Rhabditina</taxon>
        <taxon>Rhabditomorpha</taxon>
        <taxon>Rhabditoidea</taxon>
        <taxon>Rhabditidae</taxon>
        <taxon>Peloderinae</taxon>
        <taxon>Caenorhabditis</taxon>
    </lineage>
</organism>
<gene>
    <name type="primary">unc-41</name>
    <name type="synonym">apt-10</name>
    <name type="ORF">C27H6.1</name>
</gene>
<feature type="chain" id="PRO_0000185734" description="Putative stoned B-like protein">
    <location>
        <begin position="1"/>
        <end position="1693"/>
    </location>
</feature>
<feature type="domain" description="SHD" evidence="2">
    <location>
        <begin position="1136"/>
        <end position="1283"/>
    </location>
</feature>
<feature type="domain" description="MHD" evidence="3">
    <location>
        <begin position="1287"/>
        <end position="1606"/>
    </location>
</feature>
<feature type="region of interest" description="Disordered" evidence="4">
    <location>
        <begin position="1"/>
        <end position="54"/>
    </location>
</feature>
<feature type="region of interest" description="Disordered" evidence="4">
    <location>
        <begin position="222"/>
        <end position="322"/>
    </location>
</feature>
<feature type="region of interest" description="Disordered" evidence="4">
    <location>
        <begin position="334"/>
        <end position="371"/>
    </location>
</feature>
<feature type="region of interest" description="Disordered" evidence="4">
    <location>
        <begin position="383"/>
        <end position="438"/>
    </location>
</feature>
<feature type="region of interest" description="Disordered" evidence="4">
    <location>
        <begin position="585"/>
        <end position="807"/>
    </location>
</feature>
<feature type="region of interest" description="Disordered" evidence="4">
    <location>
        <begin position="841"/>
        <end position="869"/>
    </location>
</feature>
<feature type="region of interest" description="Disordered" evidence="4">
    <location>
        <begin position="899"/>
        <end position="1024"/>
    </location>
</feature>
<feature type="region of interest" description="Disordered" evidence="4">
    <location>
        <begin position="1062"/>
        <end position="1095"/>
    </location>
</feature>
<feature type="region of interest" description="Disordered" evidence="4">
    <location>
        <begin position="1633"/>
        <end position="1693"/>
    </location>
</feature>
<feature type="short sequence motif" description="DPF 1">
    <location>
        <begin position="684"/>
        <end position="686"/>
    </location>
</feature>
<feature type="short sequence motif" description="DPF 2">
    <location>
        <begin position="1006"/>
        <end position="1008"/>
    </location>
</feature>
<feature type="short sequence motif" description="DPF 3">
    <location>
        <begin position="1024"/>
        <end position="1026"/>
    </location>
</feature>
<feature type="short sequence motif" description="DPF 4">
    <location>
        <begin position="1039"/>
        <end position="1041"/>
    </location>
</feature>
<feature type="compositionally biased region" description="Basic and acidic residues" evidence="4">
    <location>
        <begin position="1"/>
        <end position="12"/>
    </location>
</feature>
<feature type="compositionally biased region" description="Low complexity" evidence="4">
    <location>
        <begin position="26"/>
        <end position="39"/>
    </location>
</feature>
<feature type="compositionally biased region" description="Basic and acidic residues" evidence="4">
    <location>
        <begin position="279"/>
        <end position="301"/>
    </location>
</feature>
<feature type="compositionally biased region" description="Basic and acidic residues" evidence="4">
    <location>
        <begin position="311"/>
        <end position="322"/>
    </location>
</feature>
<feature type="compositionally biased region" description="Acidic residues" evidence="4">
    <location>
        <begin position="360"/>
        <end position="371"/>
    </location>
</feature>
<feature type="compositionally biased region" description="Basic and acidic residues" evidence="4">
    <location>
        <begin position="393"/>
        <end position="412"/>
    </location>
</feature>
<feature type="compositionally biased region" description="Polar residues" evidence="4">
    <location>
        <begin position="596"/>
        <end position="615"/>
    </location>
</feature>
<feature type="compositionally biased region" description="Low complexity" evidence="4">
    <location>
        <begin position="632"/>
        <end position="643"/>
    </location>
</feature>
<feature type="compositionally biased region" description="Low complexity" evidence="4">
    <location>
        <begin position="708"/>
        <end position="722"/>
    </location>
</feature>
<feature type="compositionally biased region" description="Pro residues" evidence="4">
    <location>
        <begin position="745"/>
        <end position="760"/>
    </location>
</feature>
<feature type="compositionally biased region" description="Polar residues" evidence="4">
    <location>
        <begin position="786"/>
        <end position="807"/>
    </location>
</feature>
<feature type="compositionally biased region" description="Basic and acidic residues" evidence="4">
    <location>
        <begin position="899"/>
        <end position="913"/>
    </location>
</feature>
<feature type="compositionally biased region" description="Polar residues" evidence="4">
    <location>
        <begin position="1073"/>
        <end position="1095"/>
    </location>
</feature>
<feature type="compositionally biased region" description="Polar residues" evidence="4">
    <location>
        <begin position="1637"/>
        <end position="1651"/>
    </location>
</feature>
<feature type="splice variant" id="VSP_041806" description="In isoform c." evidence="5">
    <location>
        <begin position="1"/>
        <end position="373"/>
    </location>
</feature>
<feature type="splice variant" id="VSP_041805" description="In isoform b." evidence="5">
    <location>
        <begin position="1"/>
        <end position="282"/>
    </location>
</feature>
<protein>
    <recommendedName>
        <fullName>Putative stoned B-like protein</fullName>
    </recommendedName>
    <alternativeName>
        <fullName>Adaptin-related protein 10</fullName>
    </alternativeName>
    <alternativeName>
        <fullName>Uncoordinated protein 41</fullName>
    </alternativeName>
</protein>
<dbReference type="EMBL" id="Z81042">
    <property type="protein sequence ID" value="CBW48339.1"/>
    <property type="molecule type" value="Genomic_DNA"/>
</dbReference>
<dbReference type="EMBL" id="Z81042">
    <property type="protein sequence ID" value="CBW48340.1"/>
    <property type="molecule type" value="Genomic_DNA"/>
</dbReference>
<dbReference type="EMBL" id="Z81042">
    <property type="protein sequence ID" value="CBW48341.1"/>
    <property type="molecule type" value="Genomic_DNA"/>
</dbReference>
<dbReference type="PIR" id="T19536">
    <property type="entry name" value="T19536"/>
</dbReference>
<dbReference type="RefSeq" id="NP_001256157.1">
    <molecule id="P90761-1"/>
    <property type="nucleotide sequence ID" value="NM_001269228.3"/>
</dbReference>
<dbReference type="RefSeq" id="NP_001256158.1">
    <molecule id="P90761-2"/>
    <property type="nucleotide sequence ID" value="NM_001269229.3"/>
</dbReference>
<dbReference type="RefSeq" id="NP_001256159.1">
    <molecule id="P90761-3"/>
    <property type="nucleotide sequence ID" value="NM_001269230.3"/>
</dbReference>
<dbReference type="SMR" id="P90761"/>
<dbReference type="BioGRID" id="44421">
    <property type="interactions" value="2"/>
</dbReference>
<dbReference type="FunCoup" id="P90761">
    <property type="interactions" value="3"/>
</dbReference>
<dbReference type="STRING" id="6239.C27H6.1a.1"/>
<dbReference type="PaxDb" id="6239-C27H6.1a"/>
<dbReference type="PeptideAtlas" id="P90761"/>
<dbReference type="EnsemblMetazoa" id="C27H6.1a.1">
    <molecule id="P90761-1"/>
    <property type="protein sequence ID" value="C27H6.1a.1"/>
    <property type="gene ID" value="WBGene00006777"/>
</dbReference>
<dbReference type="EnsemblMetazoa" id="C27H6.1b.1">
    <molecule id="P90761-2"/>
    <property type="protein sequence ID" value="C27H6.1b.1"/>
    <property type="gene ID" value="WBGene00006777"/>
</dbReference>
<dbReference type="EnsemblMetazoa" id="C27H6.1c.1">
    <molecule id="P90761-3"/>
    <property type="protein sequence ID" value="C27H6.1c.1"/>
    <property type="gene ID" value="WBGene00006777"/>
</dbReference>
<dbReference type="GeneID" id="179387"/>
<dbReference type="KEGG" id="cel:CELE_C27H6.1"/>
<dbReference type="UCSC" id="C27H6.1">
    <molecule id="P90761-1"/>
    <property type="organism name" value="c. elegans"/>
</dbReference>
<dbReference type="AGR" id="WB:WBGene00006777"/>
<dbReference type="CTD" id="179387"/>
<dbReference type="WormBase" id="C27H6.1a">
    <molecule id="P90761-1"/>
    <property type="protein sequence ID" value="CE45344"/>
    <property type="gene ID" value="WBGene00006777"/>
    <property type="gene designation" value="unc-41"/>
</dbReference>
<dbReference type="WormBase" id="C27H6.1b">
    <molecule id="P90761-2"/>
    <property type="protein sequence ID" value="CE45373"/>
    <property type="gene ID" value="WBGene00006777"/>
    <property type="gene designation" value="unc-41"/>
</dbReference>
<dbReference type="WormBase" id="C27H6.1c">
    <molecule id="P90761-3"/>
    <property type="protein sequence ID" value="CE45298"/>
    <property type="gene ID" value="WBGene00006777"/>
    <property type="gene designation" value="unc-41"/>
</dbReference>
<dbReference type="eggNOG" id="KOG2677">
    <property type="taxonomic scope" value="Eukaryota"/>
</dbReference>
<dbReference type="GeneTree" id="ENSGT00940000168142"/>
<dbReference type="HOGENOM" id="CLU_002975_0_0_1"/>
<dbReference type="InParanoid" id="P90761"/>
<dbReference type="OMA" id="CEGMDLE"/>
<dbReference type="OrthoDB" id="10063141at2759"/>
<dbReference type="Reactome" id="R-CEL-8856825">
    <property type="pathway name" value="Cargo recognition for clathrin-mediated endocytosis"/>
</dbReference>
<dbReference type="Reactome" id="R-CEL-8856828">
    <property type="pathway name" value="Clathrin-mediated endocytosis"/>
</dbReference>
<dbReference type="PRO" id="PR:P90761"/>
<dbReference type="Proteomes" id="UP000001940">
    <property type="component" value="Chromosome V"/>
</dbReference>
<dbReference type="Bgee" id="WBGene00006777">
    <property type="expression patterns" value="Expressed in pharyngeal muscle cell (C elegans) and 3 other cell types or tissues"/>
</dbReference>
<dbReference type="GO" id="GO:0030122">
    <property type="term" value="C:AP-2 adaptor complex"/>
    <property type="evidence" value="ECO:0000318"/>
    <property type="project" value="GO_Central"/>
</dbReference>
<dbReference type="GO" id="GO:0045202">
    <property type="term" value="C:synapse"/>
    <property type="evidence" value="ECO:0000314"/>
    <property type="project" value="WormBase"/>
</dbReference>
<dbReference type="GO" id="GO:0008021">
    <property type="term" value="C:synaptic vesicle"/>
    <property type="evidence" value="ECO:0000318"/>
    <property type="project" value="GO_Central"/>
</dbReference>
<dbReference type="GO" id="GO:0035615">
    <property type="term" value="F:clathrin adaptor activity"/>
    <property type="evidence" value="ECO:0000318"/>
    <property type="project" value="GO_Central"/>
</dbReference>
<dbReference type="GO" id="GO:0072583">
    <property type="term" value="P:clathrin-dependent endocytosis"/>
    <property type="evidence" value="ECO:0000318"/>
    <property type="project" value="GO_Central"/>
</dbReference>
<dbReference type="GO" id="GO:0040017">
    <property type="term" value="P:positive regulation of locomotion"/>
    <property type="evidence" value="ECO:0000315"/>
    <property type="project" value="WormBase"/>
</dbReference>
<dbReference type="GO" id="GO:0030100">
    <property type="term" value="P:regulation of endocytosis"/>
    <property type="evidence" value="ECO:0000318"/>
    <property type="project" value="GO_Central"/>
</dbReference>
<dbReference type="GO" id="GO:0048488">
    <property type="term" value="P:synaptic vesicle endocytosis"/>
    <property type="evidence" value="ECO:0000318"/>
    <property type="project" value="GO_Central"/>
</dbReference>
<dbReference type="FunFam" id="2.60.40.1170:FF:000016">
    <property type="entry name" value="AP-1 complex subunit mu"/>
    <property type="match status" value="1"/>
</dbReference>
<dbReference type="FunFam" id="2.60.40.1170:FF:000022">
    <property type="entry name" value="AP-1 complex subunit mu"/>
    <property type="match status" value="1"/>
</dbReference>
<dbReference type="FunFam" id="2.60.40.1170:FF:000018">
    <property type="entry name" value="stonin-2 isoform X2"/>
    <property type="match status" value="1"/>
</dbReference>
<dbReference type="Gene3D" id="2.60.40.1170">
    <property type="entry name" value="Mu homology domain, subdomain B"/>
    <property type="match status" value="3"/>
</dbReference>
<dbReference type="InterPro" id="IPR050431">
    <property type="entry name" value="Adaptor_comp_med_subunit"/>
</dbReference>
<dbReference type="InterPro" id="IPR036168">
    <property type="entry name" value="AP2_Mu_C_sf"/>
</dbReference>
<dbReference type="InterPro" id="IPR028565">
    <property type="entry name" value="MHD"/>
</dbReference>
<dbReference type="InterPro" id="IPR012320">
    <property type="entry name" value="SHD_dom"/>
</dbReference>
<dbReference type="PANTHER" id="PTHR10529">
    <property type="entry name" value="AP COMPLEX SUBUNIT MU"/>
    <property type="match status" value="1"/>
</dbReference>
<dbReference type="Pfam" id="PF00928">
    <property type="entry name" value="Adap_comp_sub"/>
    <property type="match status" value="1"/>
</dbReference>
<dbReference type="SUPFAM" id="SSF49447">
    <property type="entry name" value="Second domain of Mu2 adaptin subunit (ap50) of ap2 adaptor"/>
    <property type="match status" value="1"/>
</dbReference>
<dbReference type="PROSITE" id="PS51072">
    <property type="entry name" value="MHD"/>
    <property type="match status" value="1"/>
</dbReference>
<dbReference type="PROSITE" id="PS51070">
    <property type="entry name" value="SHD"/>
    <property type="match status" value="1"/>
</dbReference>
<keyword id="KW-0025">Alternative splicing</keyword>
<keyword id="KW-0963">Cytoplasm</keyword>
<keyword id="KW-0254">Endocytosis</keyword>
<keyword id="KW-1185">Reference proteome</keyword>
<keyword id="KW-0677">Repeat</keyword>
<accession>P90761</accession>
<accession>E1B6U3</accession>
<accession>E1B6U4</accession>
<accession>E1B6U5</accession>
<proteinExistence type="inferred from homology"/>
<name>STNB_CAEEL</name>
<sequence length="1693" mass="189844">MSWRDRDFDPHGGRNAFRLTDESKQSSSERAASMRAMRSFTQSIEDEGPPELPASLDIDMIEGVSMKTSDTNDTIIEVKPGKVDPQLGETQKYKMAVPGPGHSEQEQELHKSLIRDEEEDAEVEQVFAASAEPVVTPPKSLNFAETAEELRHAYDQKIRKRPTTPTSACVLDGIAFFAGSVDGSNDTIPTDAEKKIKVSIPSGRRRKTENMSYSEFYESMANQIPGGGGRRMSQSGRTTPLHDYEGDILDENPQYKDKAPPAPVVHRRSSIEWENFADMEDKMEQAEEKARKEEKKEKEETAEVAQNDDVTTEKHQNEVEKSKKMLNFLAKPPTVEITSPDAPHQGAFHDNTPKEPKVVEEEEDDDLPTFSEDMDEARQQVMKEMTESVVKTENVENEKQEDTHISEGHVEYGTEESPAVTDGSYQQDGTENAYDPNAYPGYIWNYETQEWEYDPSYVAPEEPIDQSAYEAQAAAYAEVDQRAAEVVYQREHAGYDQGDFYTHQDTSYSSEAYAHDQAKGYQDPNAYGAEAAADNSQEYDYSAYGGYEGYLAACRAYDEESQQPQYGETVATEAYSQDYGYEQQGDYHHEGVGATDENSTSAISGYEQNGASTSLGYGDAQGYDGYDHNASYYQGQEYQQEYYQNHKYENSQYQVDQHPAESAAPPRPVAPMEPLFKQAPPQPDPFGWDSSGHTGDAPTASEPVQELSPTPEASSSTGTSAPARPPPARPEAPKKDETAVDAAAPPRPPPAARPPPPRPAPANKEKPKEPEPEEDAWAQFKRMTEKVSTAVKSTESTLKNLEETSAANDIKDESYLANVGGSQGFVNESTQKEIQRLTEEKKMEKLQKKKLKQQGKKAATPTLEPDEEDAMDRAAQELAMKMASMRSDMADWKAPEMIPVKEIKKAPEIRRVDSASAIPPRKRSSIKDVQQDSGGSLELPPHLAAPQDSIAPNPKGDHAPDDPILSAPAWADFETSEPMLPPSESGFFSNKDASNEGGVSRDATDDPFVTTVASSEKRSSFVADPFAPQQAALIDESYDPFAVVAVEEVVAMAKAKAEQAAANAENEDDFYNGRQSPTLSTPTPEGGSPISQQRPNAFEDDFKCAELTGLDTPTPLYDEDDSQPLTDFIPKFDGDGWDLMVRHPIKKKSFMAERCWKPCYVRLHGLTLYLYNDKKDAQPIQELLLQATYSLSDTTLQAYDVYGKIHTVKLQFVVYKEKVGIRPGQISRLVDGHITKYGLPLEHSAQCTVLLKFGSLNASHLQTFVTTVEDLLFKCKITRTAKPVYKQDEVQIHCYDEYSAFVDKEGILSDQKARVRLFCLAFLTGSPVLEVGLNDRRRQGKEIVRRKDILPMYTERWIRFEALEFHSIVNKPEFDKEQVIAFSPPDGCFFEIMRFRVRPPRNREKAMTVKSIMKIAGSKVEIRIEAMAAAQIQRTRGSDERRNIPCEDIAIRFPIPEAWIYLFREERHWGVGSIHSKKLRPGKVKNLKDRLLGAVQASEPNLIECAIGEAKYEHVYRSLVWRIPRLPEKHHAAYKSHLLKCRFELSSFDLMPEEFLPRCDVDFTMPLATVSNTVVRSVSVEQHEDSDRVEKFVRYVAKYQYKVEIDYVQCADLDLDMADPSVNPEAAAAPVPELHQPTFNPSTQESDTQQGYRIDFNEAEMGGSNRRDDSSSDEEPDSHKMPIIQIDMKNYGY</sequence>
<reference key="1">
    <citation type="journal article" date="1998" name="Science">
        <title>Genome sequence of the nematode C. elegans: a platform for investigating biology.</title>
        <authorList>
            <consortium name="The C. elegans sequencing consortium"/>
        </authorList>
    </citation>
    <scope>NUCLEOTIDE SEQUENCE [LARGE SCALE GENOMIC DNA]</scope>
    <scope>ALTERNATIVE SPLICING</scope>
    <source>
        <strain>Bristol N2</strain>
    </source>
</reference>
<reference key="2">
    <citation type="journal article" date="2001" name="Curr. Opin. Cell Biol.">
        <title>Adaptor-related proteins.</title>
        <authorList>
            <person name="Robinson M.S."/>
            <person name="Bonifacino J.S."/>
        </authorList>
    </citation>
    <scope>ASSIGNMENT OF APT-10 TO UNC-41</scope>
</reference>
<comment type="function">
    <text evidence="1">Potential adapter protein, which may be involved in endocytic vesicle recycling of synaptic vesicles.</text>
</comment>
<comment type="subcellular location">
    <subcellularLocation>
        <location evidence="5">Cytoplasm</location>
    </subcellularLocation>
</comment>
<comment type="alternative products">
    <event type="alternative splicing"/>
    <isoform>
        <id>P90761-1</id>
        <name>a</name>
        <sequence type="displayed"/>
    </isoform>
    <isoform>
        <id>P90761-2</id>
        <name>b</name>
        <sequence type="described" ref="VSP_041805"/>
    </isoform>
    <isoform>
        <id>P90761-3</id>
        <name>c</name>
        <sequence type="described" ref="VSP_041806"/>
    </isoform>
</comment>
<comment type="domain">
    <text evidence="1">The Asp-Pro-Phe (DPF) motifs, which are found in many presynatic proteins, are thought to mediate an interaction with Alpha-adaptin.</text>
</comment>
<comment type="similarity">
    <text evidence="5">Belongs to the Stoned B family.</text>
</comment>